<protein>
    <recommendedName>
        <fullName evidence="14">Serine/threonine-protein kinase Nek10</fullName>
        <ecNumber>2.7.11.1</ecNumber>
    </recommendedName>
    <alternativeName>
        <fullName>Never in mitosis A-related kinase 10</fullName>
        <shortName>NimA-related protein kinase 10</shortName>
    </alternativeName>
</protein>
<evidence type="ECO:0000250" key="1"/>
<evidence type="ECO:0000255" key="2"/>
<evidence type="ECO:0000255" key="3">
    <source>
        <dbReference type="PROSITE-ProRule" id="PRU00159"/>
    </source>
</evidence>
<evidence type="ECO:0000255" key="4">
    <source>
        <dbReference type="PROSITE-ProRule" id="PRU10028"/>
    </source>
</evidence>
<evidence type="ECO:0000256" key="5">
    <source>
        <dbReference type="SAM" id="MobiDB-lite"/>
    </source>
</evidence>
<evidence type="ECO:0000269" key="6">
    <source>
    </source>
</evidence>
<evidence type="ECO:0000269" key="7">
    <source>
    </source>
</evidence>
<evidence type="ECO:0000269" key="8">
    <source>
    </source>
</evidence>
<evidence type="ECO:0000269" key="9">
    <source>
    </source>
</evidence>
<evidence type="ECO:0000303" key="10">
    <source>
    </source>
</evidence>
<evidence type="ECO:0000303" key="11">
    <source>
    </source>
</evidence>
<evidence type="ECO:0000303" key="12">
    <source>
    </source>
</evidence>
<evidence type="ECO:0000303" key="13">
    <source ref="2"/>
</evidence>
<evidence type="ECO:0000305" key="14"/>
<evidence type="ECO:0000312" key="15">
    <source>
        <dbReference type="HGNC" id="HGNC:18592"/>
    </source>
</evidence>
<sequence>MPDQDKKVKTTEKSTDKQQEITIRDYSDLKRLRCLLNVQSSKQQLPAINFDSAQNSMTKSEPAIRAGGHRARGQWHESTEAVELENFSINYKNERNFSKHPQRKLFQEIFTALVKNRLISREWVNRAPSIHFLRVLICLRLLMRDPCYQEILHSLGGIENLAQYMEIVANEYLGYGEEQHTVDKLVNMTYIFQKLAAVKDQREWVTTSGAHKTLVNLLGARDTNVLLGSLLALASLAESQECREKISELNIVENLLMILHEYDLLSKRLTAELLRLLCAEPQVKEQVKLYEGIPVLLSLLHSDHLKLLWSIVWILVQVCEDPETSVEIRIWGGIKQLLHILQGDRNFVSDHSSIGSLSSANAAGRIQQLHLSEDLSPREIQENTFSLQAACCAALTELVLNDTNAHQVVQENGVYTIAKLILPNKQKNAAKSNLLQCYAFRALRFLFSMERNRPLFKRLFPTDLFEIFIDIGHYVRDISAYEELVSKLNLLVEDELKQIAENIESINQNKAPLKYIGNYAILDHLGSGAFGCVYKVRKHSGQNLLAMKEVNLHNPAFGKDKKDRDSSVRNIVSELTIIKEQLYHPNIVRYYKTFLENDRLYIVMELIEGAPLGEHFSSLKEKHHHFTEERLWKIFIQLCLALRYLHKEKRIVHRDLTPNNIMLGDKDKVTVTDFGLAKQKQENSKLTSVVGTILYSCPEVLKSEPYGEKADVWAVGCILYQMATLSPPFYSTNMLSLATKIVEAVYEPVPEGIYSEKVTDTISRCLTPDAEARPDIVEVSSMISDVMMKYLDNLSTSQLSLEKKLERERRRTQRYFMEANRNTVTCHHELAVLSHETFEKASLSSSSSGAASLKSELSESADLPPEGFQASYGKDEDRACDEILSDDNFNLENAEKDTYSEVDDELDISDNSSSSSSSPLKESTFNILKRSFSASGGERQSQTRDFTGGTGSRPRPALLPLDLLLKVPPHMLRAHIKEIEAELVTGWQSHSLPAVILRNLKDHGPQMGTFLWQASAGIAVSQRKVRQISDPIQQILIQLHKIIYITQLPPALHHNLKRRVIERFKKSLFSQQSNPCNLKSEIKKLSQGSPEPIEPNFFTADYHLLHRSSGGNSLSPNDPTGLPTSIELEEGITYEQMQTVIEEVLEESGYYNFTSNRYHSYPWGTKNHPTKR</sequence>
<comment type="function">
    <text evidence="8 9">Plays a role in the cellular response to UV irradiation. Mediates G2/M cell cycle arrest, MEK autoactivation and ERK1/2-signaling pathway activation in response to UV irradiation. In ciliated cells of airways, it is involved in the regulation of mucociliary transport (PubMed:31959991).</text>
</comment>
<comment type="catalytic activity">
    <reaction>
        <text>L-seryl-[protein] + ATP = O-phospho-L-seryl-[protein] + ADP + H(+)</text>
        <dbReference type="Rhea" id="RHEA:17989"/>
        <dbReference type="Rhea" id="RHEA-COMP:9863"/>
        <dbReference type="Rhea" id="RHEA-COMP:11604"/>
        <dbReference type="ChEBI" id="CHEBI:15378"/>
        <dbReference type="ChEBI" id="CHEBI:29999"/>
        <dbReference type="ChEBI" id="CHEBI:30616"/>
        <dbReference type="ChEBI" id="CHEBI:83421"/>
        <dbReference type="ChEBI" id="CHEBI:456216"/>
        <dbReference type="EC" id="2.7.11.1"/>
    </reaction>
</comment>
<comment type="catalytic activity">
    <reaction>
        <text>L-threonyl-[protein] + ATP = O-phospho-L-threonyl-[protein] + ADP + H(+)</text>
        <dbReference type="Rhea" id="RHEA:46608"/>
        <dbReference type="Rhea" id="RHEA-COMP:11060"/>
        <dbReference type="Rhea" id="RHEA-COMP:11605"/>
        <dbReference type="ChEBI" id="CHEBI:15378"/>
        <dbReference type="ChEBI" id="CHEBI:30013"/>
        <dbReference type="ChEBI" id="CHEBI:30616"/>
        <dbReference type="ChEBI" id="CHEBI:61977"/>
        <dbReference type="ChEBI" id="CHEBI:456216"/>
        <dbReference type="EC" id="2.7.11.1"/>
    </reaction>
</comment>
<comment type="cofactor">
    <cofactor evidence="1">
        <name>Mg(2+)</name>
        <dbReference type="ChEBI" id="CHEBI:18420"/>
    </cofactor>
</comment>
<comment type="subunit">
    <text evidence="8">Interacts with RAF1 and MAP2K1; the interaction is direct with RAF1 and required for ERK1/2-signaling pathway activation in response to UV irradiation.</text>
</comment>
<comment type="alternative products">
    <event type="alternative splicing"/>
    <isoform>
        <id>Q6ZWH5-1</id>
        <name>1</name>
        <sequence type="displayed"/>
    </isoform>
    <isoform>
        <id>Q6ZWH5-2</id>
        <name>2</name>
        <sequence type="described" ref="VSP_021536 VSP_035692"/>
    </isoform>
    <isoform>
        <id>Q6ZWH5-3</id>
        <name>3</name>
        <sequence type="described" ref="VSP_021534 VSP_021535"/>
    </isoform>
    <isoform>
        <id>Q6ZWH5-4</id>
        <name>4</name>
        <sequence type="described" ref="VSP_035690 VSP_035691"/>
    </isoform>
    <isoform>
        <id>Q6ZWH5-5</id>
        <name>5</name>
        <sequence type="described" ref="VSP_035688 VSP_035689"/>
    </isoform>
    <isoform>
        <id>Q6ZWH5-6</id>
        <name>6</name>
        <sequence type="described" ref="VSP_035688 VSP_035689 VSP_035694"/>
    </isoform>
    <isoform>
        <id>Q6ZWH5-7</id>
        <name>7</name>
        <sequence type="described" ref="VSP_035688 VSP_035689 VSP_035693"/>
    </isoform>
</comment>
<comment type="tissue specificity">
    <text evidence="9">Expressed in the lung.</text>
</comment>
<comment type="disease" evidence="9">
    <disease id="DI-05765">
        <name>Ciliary dyskinesia, primary, 44</name>
        <acronym>CILD44</acronym>
        <description>A form of primary ciliary dyskinesia, a disorder characterized by abnormalities of motile cilia. Respiratory infections leading to chronic inflammation and bronchiectasis are recurrent, due to defects in the respiratory cilia. CILD44 inheritance is autosomal recessive.</description>
        <dbReference type="MIM" id="618781"/>
    </disease>
    <text>The disease is caused by variants affecting the gene represented in this entry.</text>
</comment>
<comment type="similarity">
    <text evidence="14">Belongs to the protein kinase superfamily. NEK Ser/Thr protein kinase family. NIMA subfamily.</text>
</comment>
<gene>
    <name evidence="15" type="primary">NEK10</name>
</gene>
<name>NEK10_HUMAN</name>
<organism>
    <name type="scientific">Homo sapiens</name>
    <name type="common">Human</name>
    <dbReference type="NCBI Taxonomy" id="9606"/>
    <lineage>
        <taxon>Eukaryota</taxon>
        <taxon>Metazoa</taxon>
        <taxon>Chordata</taxon>
        <taxon>Craniata</taxon>
        <taxon>Vertebrata</taxon>
        <taxon>Euteleostomi</taxon>
        <taxon>Mammalia</taxon>
        <taxon>Eutheria</taxon>
        <taxon>Euarchontoglires</taxon>
        <taxon>Primates</taxon>
        <taxon>Haplorrhini</taxon>
        <taxon>Catarrhini</taxon>
        <taxon>Hominidae</taxon>
        <taxon>Homo</taxon>
    </lineage>
</organism>
<accession>Q6ZWH5</accession>
<accession>A8MWG1</accession>
<accession>B9ZVR0</accession>
<accession>Q45VJ4</accession>
<accession>Q6ZR11</accession>
<accession>Q7Z671</accession>
<accession>Q86XB1</accession>
<accession>Q96MB3</accession>
<proteinExistence type="evidence at protein level"/>
<reference key="1">
    <citation type="journal article" date="2004" name="Nat. Genet.">
        <title>Complete sequencing and characterization of 21,243 full-length human cDNAs.</title>
        <authorList>
            <person name="Ota T."/>
            <person name="Suzuki Y."/>
            <person name="Nishikawa T."/>
            <person name="Otsuki T."/>
            <person name="Sugiyama T."/>
            <person name="Irie R."/>
            <person name="Wakamatsu A."/>
            <person name="Hayashi K."/>
            <person name="Sato H."/>
            <person name="Nagai K."/>
            <person name="Kimura K."/>
            <person name="Makita H."/>
            <person name="Sekine M."/>
            <person name="Obayashi M."/>
            <person name="Nishi T."/>
            <person name="Shibahara T."/>
            <person name="Tanaka T."/>
            <person name="Ishii S."/>
            <person name="Yamamoto J."/>
            <person name="Saito K."/>
            <person name="Kawai Y."/>
            <person name="Isono Y."/>
            <person name="Nakamura Y."/>
            <person name="Nagahari K."/>
            <person name="Murakami K."/>
            <person name="Yasuda T."/>
            <person name="Iwayanagi T."/>
            <person name="Wagatsuma M."/>
            <person name="Shiratori A."/>
            <person name="Sudo H."/>
            <person name="Hosoiri T."/>
            <person name="Kaku Y."/>
            <person name="Kodaira H."/>
            <person name="Kondo H."/>
            <person name="Sugawara M."/>
            <person name="Takahashi M."/>
            <person name="Kanda K."/>
            <person name="Yokoi T."/>
            <person name="Furuya T."/>
            <person name="Kikkawa E."/>
            <person name="Omura Y."/>
            <person name="Abe K."/>
            <person name="Kamihara K."/>
            <person name="Katsuta N."/>
            <person name="Sato K."/>
            <person name="Tanikawa M."/>
            <person name="Yamazaki M."/>
            <person name="Ninomiya K."/>
            <person name="Ishibashi T."/>
            <person name="Yamashita H."/>
            <person name="Murakawa K."/>
            <person name="Fujimori K."/>
            <person name="Tanai H."/>
            <person name="Kimata M."/>
            <person name="Watanabe M."/>
            <person name="Hiraoka S."/>
            <person name="Chiba Y."/>
            <person name="Ishida S."/>
            <person name="Ono Y."/>
            <person name="Takiguchi S."/>
            <person name="Watanabe S."/>
            <person name="Yosida M."/>
            <person name="Hotuta T."/>
            <person name="Kusano J."/>
            <person name="Kanehori K."/>
            <person name="Takahashi-Fujii A."/>
            <person name="Hara H."/>
            <person name="Tanase T.-O."/>
            <person name="Nomura Y."/>
            <person name="Togiya S."/>
            <person name="Komai F."/>
            <person name="Hara R."/>
            <person name="Takeuchi K."/>
            <person name="Arita M."/>
            <person name="Imose N."/>
            <person name="Musashino K."/>
            <person name="Yuuki H."/>
            <person name="Oshima A."/>
            <person name="Sasaki N."/>
            <person name="Aotsuka S."/>
            <person name="Yoshikawa Y."/>
            <person name="Matsunawa H."/>
            <person name="Ichihara T."/>
            <person name="Shiohata N."/>
            <person name="Sano S."/>
            <person name="Moriya S."/>
            <person name="Momiyama H."/>
            <person name="Satoh N."/>
            <person name="Takami S."/>
            <person name="Terashima Y."/>
            <person name="Suzuki O."/>
            <person name="Nakagawa S."/>
            <person name="Senoh A."/>
            <person name="Mizoguchi H."/>
            <person name="Goto Y."/>
            <person name="Shimizu F."/>
            <person name="Wakebe H."/>
            <person name="Hishigaki H."/>
            <person name="Watanabe T."/>
            <person name="Sugiyama A."/>
            <person name="Takemoto M."/>
            <person name="Kawakami B."/>
            <person name="Yamazaki M."/>
            <person name="Watanabe K."/>
            <person name="Kumagai A."/>
            <person name="Itakura S."/>
            <person name="Fukuzumi Y."/>
            <person name="Fujimori Y."/>
            <person name="Komiyama M."/>
            <person name="Tashiro H."/>
            <person name="Tanigami A."/>
            <person name="Fujiwara T."/>
            <person name="Ono T."/>
            <person name="Yamada K."/>
            <person name="Fujii Y."/>
            <person name="Ozaki K."/>
            <person name="Hirao M."/>
            <person name="Ohmori Y."/>
            <person name="Kawabata A."/>
            <person name="Hikiji T."/>
            <person name="Kobatake N."/>
            <person name="Inagaki H."/>
            <person name="Ikema Y."/>
            <person name="Okamoto S."/>
            <person name="Okitani R."/>
            <person name="Kawakami T."/>
            <person name="Noguchi S."/>
            <person name="Itoh T."/>
            <person name="Shigeta K."/>
            <person name="Senba T."/>
            <person name="Matsumura K."/>
            <person name="Nakajima Y."/>
            <person name="Mizuno T."/>
            <person name="Morinaga M."/>
            <person name="Sasaki M."/>
            <person name="Togashi T."/>
            <person name="Oyama M."/>
            <person name="Hata H."/>
            <person name="Watanabe M."/>
            <person name="Komatsu T."/>
            <person name="Mizushima-Sugano J."/>
            <person name="Satoh T."/>
            <person name="Shirai Y."/>
            <person name="Takahashi Y."/>
            <person name="Nakagawa K."/>
            <person name="Okumura K."/>
            <person name="Nagase T."/>
            <person name="Nomura N."/>
            <person name="Kikuchi H."/>
            <person name="Masuho Y."/>
            <person name="Yamashita R."/>
            <person name="Nakai K."/>
            <person name="Yada T."/>
            <person name="Nakamura Y."/>
            <person name="Ohara O."/>
            <person name="Isogai T."/>
            <person name="Sugano S."/>
        </authorList>
    </citation>
    <scope>NUCLEOTIDE SEQUENCE [LARGE SCALE MRNA] (ISOFORMS 3; 4 AND 5)</scope>
    <source>
        <tissue>Testis</tissue>
        <tissue>Trachea</tissue>
    </source>
</reference>
<reference key="2">
    <citation type="submission" date="2005-06" db="EMBL/GenBank/DDBJ databases">
        <authorList>
            <person name="Li H."/>
            <person name="Nong W."/>
            <person name="Zhou G."/>
            <person name="Ke R."/>
            <person name="Shen C."/>
            <person name="Zhong G."/>
            <person name="Zheng Z."/>
            <person name="Liang M."/>
            <person name="Huang B."/>
            <person name="Lin L."/>
            <person name="Yang S."/>
        </authorList>
    </citation>
    <scope>NUCLEOTIDE SEQUENCE [LARGE SCALE MRNA] (ISOFORM 7)</scope>
</reference>
<reference key="3">
    <citation type="journal article" date="2006" name="Nature">
        <title>The DNA sequence, annotation and analysis of human chromosome 3.</title>
        <authorList>
            <person name="Muzny D.M."/>
            <person name="Scherer S.E."/>
            <person name="Kaul R."/>
            <person name="Wang J."/>
            <person name="Yu J."/>
            <person name="Sudbrak R."/>
            <person name="Buhay C.J."/>
            <person name="Chen R."/>
            <person name="Cree A."/>
            <person name="Ding Y."/>
            <person name="Dugan-Rocha S."/>
            <person name="Gill R."/>
            <person name="Gunaratne P."/>
            <person name="Harris R.A."/>
            <person name="Hawes A.C."/>
            <person name="Hernandez J."/>
            <person name="Hodgson A.V."/>
            <person name="Hume J."/>
            <person name="Jackson A."/>
            <person name="Khan Z.M."/>
            <person name="Kovar-Smith C."/>
            <person name="Lewis L.R."/>
            <person name="Lozado R.J."/>
            <person name="Metzker M.L."/>
            <person name="Milosavljevic A."/>
            <person name="Miner G.R."/>
            <person name="Morgan M.B."/>
            <person name="Nazareth L.V."/>
            <person name="Scott G."/>
            <person name="Sodergren E."/>
            <person name="Song X.-Z."/>
            <person name="Steffen D."/>
            <person name="Wei S."/>
            <person name="Wheeler D.A."/>
            <person name="Wright M.W."/>
            <person name="Worley K.C."/>
            <person name="Yuan Y."/>
            <person name="Zhang Z."/>
            <person name="Adams C.Q."/>
            <person name="Ansari-Lari M.A."/>
            <person name="Ayele M."/>
            <person name="Brown M.J."/>
            <person name="Chen G."/>
            <person name="Chen Z."/>
            <person name="Clendenning J."/>
            <person name="Clerc-Blankenburg K.P."/>
            <person name="Chen R."/>
            <person name="Chen Z."/>
            <person name="Davis C."/>
            <person name="Delgado O."/>
            <person name="Dinh H.H."/>
            <person name="Dong W."/>
            <person name="Draper H."/>
            <person name="Ernst S."/>
            <person name="Fu G."/>
            <person name="Gonzalez-Garay M.L."/>
            <person name="Garcia D.K."/>
            <person name="Gillett W."/>
            <person name="Gu J."/>
            <person name="Hao B."/>
            <person name="Haugen E."/>
            <person name="Havlak P."/>
            <person name="He X."/>
            <person name="Hennig S."/>
            <person name="Hu S."/>
            <person name="Huang W."/>
            <person name="Jackson L.R."/>
            <person name="Jacob L.S."/>
            <person name="Kelly S.H."/>
            <person name="Kube M."/>
            <person name="Levy R."/>
            <person name="Li Z."/>
            <person name="Liu B."/>
            <person name="Liu J."/>
            <person name="Liu W."/>
            <person name="Lu J."/>
            <person name="Maheshwari M."/>
            <person name="Nguyen B.-V."/>
            <person name="Okwuonu G.O."/>
            <person name="Palmeiri A."/>
            <person name="Pasternak S."/>
            <person name="Perez L.M."/>
            <person name="Phelps K.A."/>
            <person name="Plopper F.J."/>
            <person name="Qiang B."/>
            <person name="Raymond C."/>
            <person name="Rodriguez R."/>
            <person name="Saenphimmachak C."/>
            <person name="Santibanez J."/>
            <person name="Shen H."/>
            <person name="Shen Y."/>
            <person name="Subramanian S."/>
            <person name="Tabor P.E."/>
            <person name="Verduzco D."/>
            <person name="Waldron L."/>
            <person name="Wang J."/>
            <person name="Wang J."/>
            <person name="Wang Q."/>
            <person name="Williams G.A."/>
            <person name="Wong G.K.-S."/>
            <person name="Yao Z."/>
            <person name="Zhang J."/>
            <person name="Zhang X."/>
            <person name="Zhao G."/>
            <person name="Zhou J."/>
            <person name="Zhou Y."/>
            <person name="Nelson D."/>
            <person name="Lehrach H."/>
            <person name="Reinhardt R."/>
            <person name="Naylor S.L."/>
            <person name="Yang H."/>
            <person name="Olson M."/>
            <person name="Weinstock G."/>
            <person name="Gibbs R.A."/>
        </authorList>
    </citation>
    <scope>NUCLEOTIDE SEQUENCE [LARGE SCALE GENOMIC DNA]</scope>
</reference>
<reference key="4">
    <citation type="submission" date="2005-07" db="EMBL/GenBank/DDBJ databases">
        <authorList>
            <person name="Mural R.J."/>
            <person name="Istrail S."/>
            <person name="Sutton G.G."/>
            <person name="Florea L."/>
            <person name="Halpern A.L."/>
            <person name="Mobarry C.M."/>
            <person name="Lippert R."/>
            <person name="Walenz B."/>
            <person name="Shatkay H."/>
            <person name="Dew I."/>
            <person name="Miller J.R."/>
            <person name="Flanigan M.J."/>
            <person name="Edwards N.J."/>
            <person name="Bolanos R."/>
            <person name="Fasulo D."/>
            <person name="Halldorsson B.V."/>
            <person name="Hannenhalli S."/>
            <person name="Turner R."/>
            <person name="Yooseph S."/>
            <person name="Lu F."/>
            <person name="Nusskern D.R."/>
            <person name="Shue B.C."/>
            <person name="Zheng X.H."/>
            <person name="Zhong F."/>
            <person name="Delcher A.L."/>
            <person name="Huson D.H."/>
            <person name="Kravitz S.A."/>
            <person name="Mouchard L."/>
            <person name="Reinert K."/>
            <person name="Remington K.A."/>
            <person name="Clark A.G."/>
            <person name="Waterman M.S."/>
            <person name="Eichler E.E."/>
            <person name="Adams M.D."/>
            <person name="Hunkapiller M.W."/>
            <person name="Myers E.W."/>
            <person name="Venter J.C."/>
        </authorList>
    </citation>
    <scope>NUCLEOTIDE SEQUENCE [LARGE SCALE GENOMIC DNA]</scope>
</reference>
<reference key="5">
    <citation type="journal article" date="2004" name="Genome Res.">
        <title>The status, quality, and expansion of the NIH full-length cDNA project: the Mammalian Gene Collection (MGC).</title>
        <authorList>
            <consortium name="The MGC Project Team"/>
        </authorList>
    </citation>
    <scope>NUCLEOTIDE SEQUENCE [LARGE SCALE MRNA] (ISOFORM 6)</scope>
    <source>
        <tissue>Testis</tissue>
    </source>
</reference>
<reference key="6">
    <citation type="journal article" date="2007" name="BMC Genomics">
        <title>The full-ORF clone resource of the German cDNA consortium.</title>
        <authorList>
            <person name="Bechtel S."/>
            <person name="Rosenfelder H."/>
            <person name="Duda A."/>
            <person name="Schmidt C.P."/>
            <person name="Ernst U."/>
            <person name="Wellenreuther R."/>
            <person name="Mehrle A."/>
            <person name="Schuster C."/>
            <person name="Bahr A."/>
            <person name="Bloecker H."/>
            <person name="Heubner D."/>
            <person name="Hoerlein A."/>
            <person name="Michel G."/>
            <person name="Wedler H."/>
            <person name="Koehrer K."/>
            <person name="Ottenwaelder B."/>
            <person name="Poustka A."/>
            <person name="Wiemann S."/>
            <person name="Schupp I."/>
        </authorList>
    </citation>
    <scope>NUCLEOTIDE SEQUENCE [LARGE SCALE MRNA] OF 75-1172 (ISOFORM 2)</scope>
    <scope>VARIANT SER-513</scope>
    <source>
        <tissue>Liver</tissue>
    </source>
</reference>
<reference key="7">
    <citation type="journal article" date="2007" name="Nature">
        <title>Patterns of somatic mutation in human cancer genomes.</title>
        <authorList>
            <person name="Greenman C."/>
            <person name="Stephens P."/>
            <person name="Smith R."/>
            <person name="Dalgliesh G.L."/>
            <person name="Hunter C."/>
            <person name="Bignell G."/>
            <person name="Davies H."/>
            <person name="Teague J."/>
            <person name="Butler A."/>
            <person name="Stevens C."/>
            <person name="Edkins S."/>
            <person name="O'Meara S."/>
            <person name="Vastrik I."/>
            <person name="Schmidt E.E."/>
            <person name="Avis T."/>
            <person name="Barthorpe S."/>
            <person name="Bhamra G."/>
            <person name="Buck G."/>
            <person name="Choudhury B."/>
            <person name="Clements J."/>
            <person name="Cole J."/>
            <person name="Dicks E."/>
            <person name="Forbes S."/>
            <person name="Gray K."/>
            <person name="Halliday K."/>
            <person name="Harrison R."/>
            <person name="Hills K."/>
            <person name="Hinton J."/>
            <person name="Jenkinson A."/>
            <person name="Jones D."/>
            <person name="Menzies A."/>
            <person name="Mironenko T."/>
            <person name="Perry J."/>
            <person name="Raine K."/>
            <person name="Richardson D."/>
            <person name="Shepherd R."/>
            <person name="Small A."/>
            <person name="Tofts C."/>
            <person name="Varian J."/>
            <person name="Webb T."/>
            <person name="West S."/>
            <person name="Widaa S."/>
            <person name="Yates A."/>
            <person name="Cahill D.P."/>
            <person name="Louis D.N."/>
            <person name="Goldstraw P."/>
            <person name="Nicholson A.G."/>
            <person name="Brasseur F."/>
            <person name="Looijenga L."/>
            <person name="Weber B.L."/>
            <person name="Chiew Y.-E."/>
            <person name="DeFazio A."/>
            <person name="Greaves M.F."/>
            <person name="Green A.R."/>
            <person name="Campbell P."/>
            <person name="Birney E."/>
            <person name="Easton D.F."/>
            <person name="Chenevix-Trench G."/>
            <person name="Tan M.-H."/>
            <person name="Khoo S.K."/>
            <person name="Teh B.T."/>
            <person name="Yuen S.T."/>
            <person name="Leung S.Y."/>
            <person name="Wooster R."/>
            <person name="Futreal P.A."/>
            <person name="Stratton M.R."/>
        </authorList>
    </citation>
    <scope>VARIANTS [LARGE SCALE ANALYSIS] LEU-50; VAL-66; SER-67; LYS-379; SER-513; SER-659 AND VAL-701</scope>
</reference>
<reference key="8">
    <citation type="journal article" date="2011" name="Mol. Cell. Biol.">
        <title>Nek10 mediates G2/M cell cycle arrest and MEK autoactivation in response to UV irradiation.</title>
        <authorList>
            <person name="Moniz L.S."/>
            <person name="Stambolic V."/>
        </authorList>
    </citation>
    <scope>FUNCTION</scope>
    <scope>MUTAGENESIS OF LYS-548</scope>
    <scope>INTERACTION WITH RAF1 AND MAP2K1</scope>
</reference>
<reference key="9">
    <citation type="journal article" date="2020" name="Nat. Med.">
        <title>A human ciliopathy reveals essential functions for NEK10 in airway mucociliary clearance.</title>
        <authorList>
            <person name="Chivukula R.R."/>
            <person name="Montoro D.T."/>
            <person name="Leung H.M."/>
            <person name="Yang J."/>
            <person name="Shamseldin H.E."/>
            <person name="Taylor M.S."/>
            <person name="Dougherty G.W."/>
            <person name="Zariwala M.A."/>
            <person name="Carson J."/>
            <person name="Daniels M.L.A."/>
            <person name="Sears P.R."/>
            <person name="Black K.E."/>
            <person name="Hariri L.P."/>
            <person name="Almogarri I."/>
            <person name="Frenkel E.M."/>
            <person name="Vinarsky V."/>
            <person name="Omran H."/>
            <person name="Knowles M.R."/>
            <person name="Tearney G.J."/>
            <person name="Alkuraya F.S."/>
            <person name="Sabatini D.M."/>
        </authorList>
    </citation>
    <scope>FUNCTION</scope>
    <scope>TISSUE SPECIFICITY</scope>
    <scope>INVOLVEMENT IN CILD44</scope>
    <scope>MUTAGENESIS OF LYS-548 AND SER-684</scope>
    <scope>VARIANTS CILD44 LEU-748 AND CYS-773</scope>
</reference>
<feature type="chain" id="PRO_0000259767" description="Serine/threonine-protein kinase Nek10">
    <location>
        <begin position="1"/>
        <end position="1172"/>
    </location>
</feature>
<feature type="repeat" description="ARM">
    <location>
        <begin position="209"/>
        <end position="251"/>
    </location>
</feature>
<feature type="domain" description="Protein kinase" evidence="3">
    <location>
        <begin position="519"/>
        <end position="712"/>
    </location>
</feature>
<feature type="region of interest" description="Disordered" evidence="5">
    <location>
        <begin position="855"/>
        <end position="875"/>
    </location>
</feature>
<feature type="region of interest" description="Disordered" evidence="5">
    <location>
        <begin position="898"/>
        <end position="954"/>
    </location>
</feature>
<feature type="coiled-coil region" evidence="2">
    <location>
        <begin position="481"/>
        <end position="514"/>
    </location>
</feature>
<feature type="compositionally biased region" description="Polar residues" evidence="5">
    <location>
        <begin position="919"/>
        <end position="945"/>
    </location>
</feature>
<feature type="active site" description="Proton acceptor" evidence="3 4">
    <location>
        <position position="655"/>
    </location>
</feature>
<feature type="binding site" evidence="3">
    <location>
        <begin position="525"/>
        <end position="533"/>
    </location>
    <ligand>
        <name>ATP</name>
        <dbReference type="ChEBI" id="CHEBI:30616"/>
    </ligand>
</feature>
<feature type="binding site" evidence="3">
    <location>
        <position position="548"/>
    </location>
    <ligand>
        <name>ATP</name>
        <dbReference type="ChEBI" id="CHEBI:30616"/>
    </ligand>
</feature>
<feature type="splice variant" id="VSP_035688" description="In isoform 5, isoform 6 and isoform 7." evidence="10 11 13">
    <location>
        <begin position="1"/>
        <end position="688"/>
    </location>
</feature>
<feature type="splice variant" id="VSP_021534" description="In isoform 3." evidence="10">
    <original>YIFQKLAAVKDQREWVTTSGAHKTLVNLL</original>
    <variation>CKCYCRDTAIFVDLLEKAVWCLQQETRIL</variation>
    <location>
        <begin position="190"/>
        <end position="218"/>
    </location>
</feature>
<feature type="splice variant" id="VSP_021535" description="In isoform 3." evidence="10">
    <location>
        <begin position="219"/>
        <end position="1172"/>
    </location>
</feature>
<feature type="splice variant" id="VSP_021536" description="In isoform 2." evidence="12">
    <original>TDFGLAKQKQENSKLTSVVGTILYSCPEVLKSEPYGEKADVWAVGCILYQMATL</original>
    <variation>SCLKCAAPLPSLSCSCSGHIKRAGSSFAFCYHWELPDASQEANAIMVPVQPAEP</variation>
    <location>
        <begin position="672"/>
        <end position="725"/>
    </location>
</feature>
<feature type="splice variant" id="VSP_035689" description="In isoform 5, isoform 6 and isoform 7." evidence="10 11 13">
    <original>VVGTILYSC</original>
    <variation>MVPVQPAEP</variation>
    <location>
        <begin position="689"/>
        <end position="697"/>
    </location>
</feature>
<feature type="splice variant" id="VSP_035690" description="In isoform 4." evidence="10">
    <original>PEVLKSEPYGEKADV</original>
    <variation>VQHLYLRSPAPALAT</variation>
    <location>
        <begin position="698"/>
        <end position="712"/>
    </location>
</feature>
<feature type="splice variant" id="VSP_035691" description="In isoform 4." evidence="10">
    <location>
        <begin position="713"/>
        <end position="1172"/>
    </location>
</feature>
<feature type="splice variant" id="VSP_035692" description="In isoform 2." evidence="12">
    <location>
        <begin position="726"/>
        <end position="1172"/>
    </location>
</feature>
<feature type="splice variant" id="VSP_035693" description="In isoform 7." evidence="13">
    <location>
        <begin position="957"/>
        <end position="1013"/>
    </location>
</feature>
<feature type="splice variant" id="VSP_035694" description="In isoform 6." evidence="11">
    <location>
        <begin position="1004"/>
        <end position="1013"/>
    </location>
</feature>
<feature type="sequence variant" id="VAR_040928" description="In dbSNP:rs56125830." evidence="6">
    <original>F</original>
    <variation>L</variation>
    <location>
        <position position="50"/>
    </location>
</feature>
<feature type="sequence variant" id="VAR_040929" description="In an ovarian mucinous carcinoma sample; somatic mutation; dbSNP:rs201821707." evidence="6">
    <original>A</original>
    <variation>V</variation>
    <location>
        <position position="66"/>
    </location>
</feature>
<feature type="sequence variant" id="VAR_040930" description="In dbSNP:rs55958314." evidence="6">
    <original>G</original>
    <variation>S</variation>
    <location>
        <position position="67"/>
    </location>
</feature>
<feature type="sequence variant" id="VAR_040931" description="In a metastatic melanoma sample; somatic mutation." evidence="6">
    <original>E</original>
    <variation>K</variation>
    <location>
        <position position="379"/>
    </location>
</feature>
<feature type="sequence variant" id="VAR_040932" description="In dbSNP:rs10510592." evidence="6 7">
    <original>L</original>
    <variation>S</variation>
    <location>
        <position position="513"/>
    </location>
</feature>
<feature type="sequence variant" id="VAR_040933" description="In dbSNP:rs55833401." evidence="6">
    <original>N</original>
    <variation>S</variation>
    <location>
        <position position="659"/>
    </location>
</feature>
<feature type="sequence variant" id="VAR_040934" description="In dbSNP:rs34313679." evidence="6">
    <original>L</original>
    <variation>V</variation>
    <location>
        <position position="701"/>
    </location>
</feature>
<feature type="sequence variant" id="VAR_083827" description="In CILD44; uncertain significance; dbSNP:rs1575215909." evidence="9">
    <original>P</original>
    <variation>L</variation>
    <location>
        <position position="748"/>
    </location>
</feature>
<feature type="sequence variant" id="VAR_083828" description="In CILD44; uncertain significance; dbSNP:rs766982731." evidence="9">
    <original>R</original>
    <variation>C</variation>
    <location>
        <position position="773"/>
    </location>
</feature>
<feature type="mutagenesis site" description="Catalytically inactive. Impaired mucociliary transport." evidence="8 9">
    <original>K</original>
    <variation>R</variation>
    <location>
        <position position="548"/>
    </location>
</feature>
<feature type="mutagenesis site" description="Increased mucociliary transport." evidence="9">
    <original>S</original>
    <variation>D</variation>
    <location>
        <position position="684"/>
    </location>
</feature>
<feature type="sequence conflict" description="In Ref. 6; CAD97860." evidence="14" ref="6">
    <original>S</original>
    <variation>G</variation>
    <location>
        <position position="239"/>
    </location>
</feature>
<feature type="sequence conflict" description="In Ref. 2; AAZ20184." evidence="14" ref="2">
    <original>I</original>
    <variation>F</variation>
    <location>
        <position position="762"/>
    </location>
</feature>
<feature type="sequence conflict" description="In Ref. 2; AAZ20184." evidence="14" ref="2">
    <original>T</original>
    <variation>A</variation>
    <location>
        <position position="898"/>
    </location>
</feature>
<feature type="sequence conflict" description="In Ref. 2; AAZ20184." evidence="14" ref="2">
    <original>S</original>
    <variation>P</variation>
    <location>
        <position position="1155"/>
    </location>
</feature>
<dbReference type="EC" id="2.7.11.1"/>
<dbReference type="EMBL" id="AK057247">
    <property type="protein sequence ID" value="BAB71395.1"/>
    <property type="molecule type" value="mRNA"/>
</dbReference>
<dbReference type="EMBL" id="AK123061">
    <property type="protein sequence ID" value="BAC85527.1"/>
    <property type="molecule type" value="mRNA"/>
</dbReference>
<dbReference type="EMBL" id="AK128585">
    <property type="protein sequence ID" value="BAC87513.1"/>
    <property type="molecule type" value="mRNA"/>
</dbReference>
<dbReference type="EMBL" id="DQ104438">
    <property type="protein sequence ID" value="AAZ20184.1"/>
    <property type="molecule type" value="mRNA"/>
</dbReference>
<dbReference type="EMBL" id="AC133142">
    <property type="status" value="NOT_ANNOTATED_CDS"/>
    <property type="molecule type" value="Genomic_DNA"/>
</dbReference>
<dbReference type="EMBL" id="AC093555">
    <property type="status" value="NOT_ANNOTATED_CDS"/>
    <property type="molecule type" value="Genomic_DNA"/>
</dbReference>
<dbReference type="EMBL" id="AC098931">
    <property type="status" value="NOT_ANNOTATED_CDS"/>
    <property type="molecule type" value="Genomic_DNA"/>
</dbReference>
<dbReference type="EMBL" id="AC099535">
    <property type="status" value="NOT_ANNOTATED_CDS"/>
    <property type="molecule type" value="Genomic_DNA"/>
</dbReference>
<dbReference type="EMBL" id="CH471055">
    <property type="protein sequence ID" value="EAW64376.1"/>
    <property type="molecule type" value="Genomic_DNA"/>
</dbReference>
<dbReference type="EMBL" id="BC045758">
    <property type="protein sequence ID" value="AAH45758.1"/>
    <property type="molecule type" value="mRNA"/>
</dbReference>
<dbReference type="EMBL" id="BX537852">
    <property type="protein sequence ID" value="CAD97860.1"/>
    <property type="molecule type" value="mRNA"/>
</dbReference>
<dbReference type="CCDS" id="CCDS46781.1">
    <molecule id="Q6ZWH5-4"/>
</dbReference>
<dbReference type="CCDS" id="CCDS77713.1">
    <molecule id="Q6ZWH5-5"/>
</dbReference>
<dbReference type="RefSeq" id="NP_001026911.1">
    <molecule id="Q6ZWH5-6"/>
    <property type="nucleotide sequence ID" value="NM_001031741.5"/>
</dbReference>
<dbReference type="RefSeq" id="NP_001291313.1">
    <molecule id="Q6ZWH5-5"/>
    <property type="nucleotide sequence ID" value="NM_001304384.3"/>
</dbReference>
<dbReference type="RefSeq" id="NP_001381899.1">
    <molecule id="Q6ZWH5-1"/>
    <property type="nucleotide sequence ID" value="NM_001394970.1"/>
</dbReference>
<dbReference type="RefSeq" id="NP_689747.3">
    <molecule id="Q6ZWH5-1"/>
    <property type="nucleotide sequence ID" value="NM_152534.4"/>
</dbReference>
<dbReference type="RefSeq" id="NP_955379.2">
    <molecule id="Q6ZWH5-4"/>
    <property type="nucleotide sequence ID" value="NM_199347.3"/>
</dbReference>
<dbReference type="RefSeq" id="XP_016861250.1">
    <property type="nucleotide sequence ID" value="XM_017005761.1"/>
</dbReference>
<dbReference type="RefSeq" id="XP_016861251.1">
    <molecule id="Q6ZWH5-1"/>
    <property type="nucleotide sequence ID" value="XM_017005762.3"/>
</dbReference>
<dbReference type="RefSeq" id="XP_016861252.1">
    <molecule id="Q6ZWH5-1"/>
    <property type="nucleotide sequence ID" value="XM_017005763.2"/>
</dbReference>
<dbReference type="RefSeq" id="XP_016861253.1">
    <molecule id="Q6ZWH5-1"/>
    <property type="nucleotide sequence ID" value="XM_017005764.2"/>
</dbReference>
<dbReference type="RefSeq" id="XP_016861254.1">
    <molecule id="Q6ZWH5-1"/>
    <property type="nucleotide sequence ID" value="XM_017005765.2"/>
</dbReference>
<dbReference type="RefSeq" id="XP_054201339.1">
    <molecule id="Q6ZWH5-1"/>
    <property type="nucleotide sequence ID" value="XM_054345364.1"/>
</dbReference>
<dbReference type="RefSeq" id="XP_054201340.1">
    <molecule id="Q6ZWH5-1"/>
    <property type="nucleotide sequence ID" value="XM_054345365.1"/>
</dbReference>
<dbReference type="RefSeq" id="XP_054201341.1">
    <molecule id="Q6ZWH5-1"/>
    <property type="nucleotide sequence ID" value="XM_054345366.1"/>
</dbReference>
<dbReference type="RefSeq" id="XP_054201342.1">
    <molecule id="Q6ZWH5-1"/>
    <property type="nucleotide sequence ID" value="XM_054345367.1"/>
</dbReference>
<dbReference type="SMR" id="Q6ZWH5"/>
<dbReference type="BioGRID" id="127428">
    <property type="interactions" value="14"/>
</dbReference>
<dbReference type="CORUM" id="Q6ZWH5"/>
<dbReference type="FunCoup" id="Q6ZWH5">
    <property type="interactions" value="182"/>
</dbReference>
<dbReference type="IntAct" id="Q6ZWH5">
    <property type="interactions" value="173"/>
</dbReference>
<dbReference type="MINT" id="Q6ZWH5"/>
<dbReference type="STRING" id="9606.ENSP00000343847"/>
<dbReference type="BindingDB" id="Q6ZWH5"/>
<dbReference type="ChEMBL" id="CHEMBL3108655"/>
<dbReference type="DrugCentral" id="Q6ZWH5"/>
<dbReference type="GlyGen" id="Q6ZWH5">
    <property type="glycosylation" value="1 site, 1 O-linked glycan (1 site)"/>
</dbReference>
<dbReference type="iPTMnet" id="Q6ZWH5"/>
<dbReference type="PhosphoSitePlus" id="Q6ZWH5"/>
<dbReference type="BioMuta" id="NEK10"/>
<dbReference type="DMDM" id="380865464"/>
<dbReference type="jPOST" id="Q6ZWH5"/>
<dbReference type="MassIVE" id="Q6ZWH5"/>
<dbReference type="PaxDb" id="9606-ENSP00000343847"/>
<dbReference type="PeptideAtlas" id="Q6ZWH5"/>
<dbReference type="ProteomicsDB" id="68479">
    <molecule id="Q6ZWH5-1"/>
</dbReference>
<dbReference type="ProteomicsDB" id="68480">
    <molecule id="Q6ZWH5-2"/>
</dbReference>
<dbReference type="ProteomicsDB" id="68482">
    <molecule id="Q6ZWH5-4"/>
</dbReference>
<dbReference type="ProteomicsDB" id="68483">
    <molecule id="Q6ZWH5-5"/>
</dbReference>
<dbReference type="ProteomicsDB" id="68484">
    <molecule id="Q6ZWH5-6"/>
</dbReference>
<dbReference type="ProteomicsDB" id="68485">
    <molecule id="Q6ZWH5-7"/>
</dbReference>
<dbReference type="Antibodypedia" id="27441">
    <property type="antibodies" value="72 antibodies from 24 providers"/>
</dbReference>
<dbReference type="DNASU" id="152110"/>
<dbReference type="Ensembl" id="ENST00000295720.10">
    <molecule id="Q6ZWH5-5"/>
    <property type="protein sequence ID" value="ENSP00000295720.6"/>
    <property type="gene ID" value="ENSG00000163491.18"/>
</dbReference>
<dbReference type="Ensembl" id="ENST00000341435.9">
    <molecule id="Q6ZWH5-4"/>
    <property type="protein sequence ID" value="ENSP00000343847.5"/>
    <property type="gene ID" value="ENSG00000163491.18"/>
</dbReference>
<dbReference type="Ensembl" id="ENST00000383771.8">
    <molecule id="Q6ZWH5-6"/>
    <property type="protein sequence ID" value="ENSP00000373281.4"/>
    <property type="gene ID" value="ENSG00000163491.18"/>
</dbReference>
<dbReference type="Ensembl" id="ENST00000429845.6">
    <molecule id="Q6ZWH5-1"/>
    <property type="protein sequence ID" value="ENSP00000395849.2"/>
    <property type="gene ID" value="ENSG00000163491.18"/>
</dbReference>
<dbReference type="GeneID" id="152110"/>
<dbReference type="KEGG" id="hsa:152110"/>
<dbReference type="UCSC" id="uc003cdt.3">
    <molecule id="Q6ZWH5-1"/>
    <property type="organism name" value="human"/>
</dbReference>
<dbReference type="AGR" id="HGNC:18592"/>
<dbReference type="CTD" id="152110"/>
<dbReference type="DisGeNET" id="152110"/>
<dbReference type="GeneCards" id="NEK10"/>
<dbReference type="HGNC" id="HGNC:18592">
    <property type="gene designation" value="NEK10"/>
</dbReference>
<dbReference type="HPA" id="ENSG00000163491">
    <property type="expression patterns" value="Tissue enhanced (testis, tongue)"/>
</dbReference>
<dbReference type="MalaCards" id="NEK10"/>
<dbReference type="MIM" id="618726">
    <property type="type" value="gene"/>
</dbReference>
<dbReference type="MIM" id="618781">
    <property type="type" value="phenotype"/>
</dbReference>
<dbReference type="neXtProt" id="NX_Q6ZWH5"/>
<dbReference type="OpenTargets" id="ENSG00000163491"/>
<dbReference type="Orphanet" id="244">
    <property type="disease" value="Primary ciliary dyskinesia"/>
</dbReference>
<dbReference type="PharmGKB" id="PA38594"/>
<dbReference type="VEuPathDB" id="HostDB:ENSG00000163491"/>
<dbReference type="eggNOG" id="KOG0589">
    <property type="taxonomic scope" value="Eukaryota"/>
</dbReference>
<dbReference type="GeneTree" id="ENSGT00940000161037"/>
<dbReference type="HOGENOM" id="CLU_011739_0_0_1"/>
<dbReference type="InParanoid" id="Q6ZWH5"/>
<dbReference type="OMA" id="VCLQLIP"/>
<dbReference type="OrthoDB" id="248923at2759"/>
<dbReference type="PAN-GO" id="Q6ZWH5">
    <property type="GO annotations" value="3 GO annotations based on evolutionary models"/>
</dbReference>
<dbReference type="PhylomeDB" id="Q6ZWH5"/>
<dbReference type="TreeFam" id="TF336430"/>
<dbReference type="PathwayCommons" id="Q6ZWH5"/>
<dbReference type="SignaLink" id="Q6ZWH5"/>
<dbReference type="SIGNOR" id="Q6ZWH5"/>
<dbReference type="BioGRID-ORCS" id="152110">
    <property type="hits" value="13 hits in 1178 CRISPR screens"/>
</dbReference>
<dbReference type="ChiTaRS" id="NEK10">
    <property type="organism name" value="human"/>
</dbReference>
<dbReference type="GenomeRNAi" id="152110"/>
<dbReference type="Pharos" id="Q6ZWH5">
    <property type="development level" value="Tchem"/>
</dbReference>
<dbReference type="PRO" id="PR:Q6ZWH5"/>
<dbReference type="Proteomes" id="UP000005640">
    <property type="component" value="Chromosome 3"/>
</dbReference>
<dbReference type="RNAct" id="Q6ZWH5">
    <property type="molecule type" value="protein"/>
</dbReference>
<dbReference type="Bgee" id="ENSG00000163491">
    <property type="expression patterns" value="Expressed in olfactory segment of nasal mucosa and 114 other cell types or tissues"/>
</dbReference>
<dbReference type="ExpressionAtlas" id="Q6ZWH5">
    <property type="expression patterns" value="baseline and differential"/>
</dbReference>
<dbReference type="GO" id="GO:0005576">
    <property type="term" value="C:extracellular region"/>
    <property type="evidence" value="ECO:0007669"/>
    <property type="project" value="GOC"/>
</dbReference>
<dbReference type="GO" id="GO:1902911">
    <property type="term" value="C:protein kinase complex"/>
    <property type="evidence" value="ECO:0000314"/>
    <property type="project" value="UniProtKB"/>
</dbReference>
<dbReference type="GO" id="GO:0005524">
    <property type="term" value="F:ATP binding"/>
    <property type="evidence" value="ECO:0007669"/>
    <property type="project" value="UniProtKB-KW"/>
</dbReference>
<dbReference type="GO" id="GO:0046872">
    <property type="term" value="F:metal ion binding"/>
    <property type="evidence" value="ECO:0007669"/>
    <property type="project" value="UniProtKB-KW"/>
</dbReference>
<dbReference type="GO" id="GO:0004672">
    <property type="term" value="F:protein kinase activity"/>
    <property type="evidence" value="ECO:0000314"/>
    <property type="project" value="UniProtKB"/>
</dbReference>
<dbReference type="GO" id="GO:0106310">
    <property type="term" value="F:protein serine kinase activity"/>
    <property type="evidence" value="ECO:0007669"/>
    <property type="project" value="RHEA"/>
</dbReference>
<dbReference type="GO" id="GO:0004674">
    <property type="term" value="F:protein serine/threonine kinase activity"/>
    <property type="evidence" value="ECO:0000318"/>
    <property type="project" value="GO_Central"/>
</dbReference>
<dbReference type="GO" id="GO:0120197">
    <property type="term" value="P:mucociliary clearance"/>
    <property type="evidence" value="ECO:0000315"/>
    <property type="project" value="UniProtKB"/>
</dbReference>
<dbReference type="GO" id="GO:0043406">
    <property type="term" value="P:positive regulation of MAP kinase activity"/>
    <property type="evidence" value="ECO:0000315"/>
    <property type="project" value="UniProtKB"/>
</dbReference>
<dbReference type="GO" id="GO:0031954">
    <property type="term" value="P:positive regulation of protein autophosphorylation"/>
    <property type="evidence" value="ECO:0000314"/>
    <property type="project" value="UniProtKB"/>
</dbReference>
<dbReference type="GO" id="GO:0006468">
    <property type="term" value="P:protein phosphorylation"/>
    <property type="evidence" value="ECO:0000314"/>
    <property type="project" value="UniProtKB"/>
</dbReference>
<dbReference type="GO" id="GO:1902749">
    <property type="term" value="P:regulation of cell cycle G2/M phase transition"/>
    <property type="evidence" value="ECO:0000315"/>
    <property type="project" value="UniProtKB"/>
</dbReference>
<dbReference type="GO" id="GO:0070372">
    <property type="term" value="P:regulation of ERK1 and ERK2 cascade"/>
    <property type="evidence" value="ECO:0000315"/>
    <property type="project" value="UniProtKB"/>
</dbReference>
<dbReference type="CDD" id="cd08528">
    <property type="entry name" value="STKc_Nek10"/>
    <property type="match status" value="1"/>
</dbReference>
<dbReference type="FunFam" id="1.25.10.10:FF:000612">
    <property type="entry name" value="Serine/threonine-protein kinase Nek10"/>
    <property type="match status" value="1"/>
</dbReference>
<dbReference type="FunFam" id="1.10.510.10:FF:001213">
    <property type="entry name" value="serine/threonine-protein kinase Nek10"/>
    <property type="match status" value="1"/>
</dbReference>
<dbReference type="FunFam" id="3.30.200.20:FF:000339">
    <property type="entry name" value="serine/threonine-protein kinase Nek10"/>
    <property type="match status" value="1"/>
</dbReference>
<dbReference type="Gene3D" id="1.25.10.10">
    <property type="entry name" value="Leucine-rich Repeat Variant"/>
    <property type="match status" value="2"/>
</dbReference>
<dbReference type="Gene3D" id="3.30.200.20">
    <property type="entry name" value="Phosphorylase Kinase, domain 1"/>
    <property type="match status" value="1"/>
</dbReference>
<dbReference type="Gene3D" id="1.10.510.10">
    <property type="entry name" value="Transferase(Phosphotransferase) domain 1"/>
    <property type="match status" value="1"/>
</dbReference>
<dbReference type="InterPro" id="IPR011989">
    <property type="entry name" value="ARM-like"/>
</dbReference>
<dbReference type="InterPro" id="IPR016024">
    <property type="entry name" value="ARM-type_fold"/>
</dbReference>
<dbReference type="InterPro" id="IPR011009">
    <property type="entry name" value="Kinase-like_dom_sf"/>
</dbReference>
<dbReference type="InterPro" id="IPR042666">
    <property type="entry name" value="Nek10_STKc"/>
</dbReference>
<dbReference type="InterPro" id="IPR050660">
    <property type="entry name" value="NEK_Ser/Thr_kinase"/>
</dbReference>
<dbReference type="InterPro" id="IPR000719">
    <property type="entry name" value="Prot_kinase_dom"/>
</dbReference>
<dbReference type="InterPro" id="IPR017441">
    <property type="entry name" value="Protein_kinase_ATP_BS"/>
</dbReference>
<dbReference type="InterPro" id="IPR008266">
    <property type="entry name" value="Tyr_kinase_AS"/>
</dbReference>
<dbReference type="PANTHER" id="PTHR43671">
    <property type="entry name" value="SERINE/THREONINE-PROTEIN KINASE NEK"/>
    <property type="match status" value="1"/>
</dbReference>
<dbReference type="PANTHER" id="PTHR43671:SF92">
    <property type="entry name" value="SERINE_THREONINE-PROTEIN KINASE NEK10"/>
    <property type="match status" value="1"/>
</dbReference>
<dbReference type="Pfam" id="PF00069">
    <property type="entry name" value="Pkinase"/>
    <property type="match status" value="1"/>
</dbReference>
<dbReference type="SUPFAM" id="SSF48371">
    <property type="entry name" value="ARM repeat"/>
    <property type="match status" value="1"/>
</dbReference>
<dbReference type="SUPFAM" id="SSF56112">
    <property type="entry name" value="Protein kinase-like (PK-like)"/>
    <property type="match status" value="1"/>
</dbReference>
<dbReference type="PROSITE" id="PS00107">
    <property type="entry name" value="PROTEIN_KINASE_ATP"/>
    <property type="match status" value="1"/>
</dbReference>
<dbReference type="PROSITE" id="PS50011">
    <property type="entry name" value="PROTEIN_KINASE_DOM"/>
    <property type="match status" value="1"/>
</dbReference>
<dbReference type="PROSITE" id="PS00109">
    <property type="entry name" value="PROTEIN_KINASE_TYR"/>
    <property type="match status" value="1"/>
</dbReference>
<keyword id="KW-0025">Alternative splicing</keyword>
<keyword id="KW-0067">ATP-binding</keyword>
<keyword id="KW-1186">Ciliopathy</keyword>
<keyword id="KW-0175">Coiled coil</keyword>
<keyword id="KW-0225">Disease variant</keyword>
<keyword id="KW-0418">Kinase</keyword>
<keyword id="KW-0460">Magnesium</keyword>
<keyword id="KW-0479">Metal-binding</keyword>
<keyword id="KW-0547">Nucleotide-binding</keyword>
<keyword id="KW-0990">Primary ciliary dyskinesia</keyword>
<keyword id="KW-1267">Proteomics identification</keyword>
<keyword id="KW-1185">Reference proteome</keyword>
<keyword id="KW-0723">Serine/threonine-protein kinase</keyword>
<keyword id="KW-0808">Transferase</keyword>